<accession>Q1CNA2</accession>
<accession>D1Q188</accession>
<feature type="chain" id="PRO_0000267712" description="3-octaprenyl-4-hydroxybenzoate carboxy-lyase">
    <location>
        <begin position="1"/>
        <end position="498"/>
    </location>
</feature>
<feature type="active site" description="Proton donor" evidence="1">
    <location>
        <position position="290"/>
    </location>
</feature>
<feature type="binding site" evidence="1">
    <location>
        <position position="175"/>
    </location>
    <ligand>
        <name>Mn(2+)</name>
        <dbReference type="ChEBI" id="CHEBI:29035"/>
    </ligand>
</feature>
<feature type="binding site" evidence="1">
    <location>
        <begin position="178"/>
        <end position="180"/>
    </location>
    <ligand>
        <name>prenylated FMN</name>
        <dbReference type="ChEBI" id="CHEBI:87746"/>
    </ligand>
</feature>
<feature type="binding site" evidence="1">
    <location>
        <begin position="192"/>
        <end position="194"/>
    </location>
    <ligand>
        <name>prenylated FMN</name>
        <dbReference type="ChEBI" id="CHEBI:87746"/>
    </ligand>
</feature>
<feature type="binding site" evidence="1">
    <location>
        <begin position="197"/>
        <end position="198"/>
    </location>
    <ligand>
        <name>prenylated FMN</name>
        <dbReference type="ChEBI" id="CHEBI:87746"/>
    </ligand>
</feature>
<feature type="binding site" evidence="1">
    <location>
        <position position="241"/>
    </location>
    <ligand>
        <name>Mn(2+)</name>
        <dbReference type="ChEBI" id="CHEBI:29035"/>
    </ligand>
</feature>
<organism>
    <name type="scientific">Yersinia pestis bv. Antiqua (strain Nepal516)</name>
    <dbReference type="NCBI Taxonomy" id="377628"/>
    <lineage>
        <taxon>Bacteria</taxon>
        <taxon>Pseudomonadati</taxon>
        <taxon>Pseudomonadota</taxon>
        <taxon>Gammaproteobacteria</taxon>
        <taxon>Enterobacterales</taxon>
        <taxon>Yersiniaceae</taxon>
        <taxon>Yersinia</taxon>
    </lineage>
</organism>
<proteinExistence type="inferred from homology"/>
<reference key="1">
    <citation type="journal article" date="2006" name="J. Bacteriol.">
        <title>Complete genome sequence of Yersinia pestis strains Antiqua and Nepal516: evidence of gene reduction in an emerging pathogen.</title>
        <authorList>
            <person name="Chain P.S.G."/>
            <person name="Hu P."/>
            <person name="Malfatti S.A."/>
            <person name="Radnedge L."/>
            <person name="Larimer F."/>
            <person name="Vergez L.M."/>
            <person name="Worsham P."/>
            <person name="Chu M.C."/>
            <person name="Andersen G.L."/>
        </authorList>
    </citation>
    <scope>NUCLEOTIDE SEQUENCE [LARGE SCALE GENOMIC DNA]</scope>
    <source>
        <strain>Nepal516</strain>
    </source>
</reference>
<reference key="2">
    <citation type="submission" date="2009-04" db="EMBL/GenBank/DDBJ databases">
        <title>Yersinia pestis Nepal516A whole genome shotgun sequencing project.</title>
        <authorList>
            <person name="Plunkett G. III"/>
            <person name="Anderson B.D."/>
            <person name="Baumler D.J."/>
            <person name="Burland V."/>
            <person name="Cabot E.L."/>
            <person name="Glasner J.D."/>
            <person name="Mau B."/>
            <person name="Neeno-Eckwall E."/>
            <person name="Perna N.T."/>
            <person name="Munk A.C."/>
            <person name="Tapia R."/>
            <person name="Green L.D."/>
            <person name="Rogers Y.C."/>
            <person name="Detter J.C."/>
            <person name="Bruce D.C."/>
            <person name="Brettin T.S."/>
        </authorList>
    </citation>
    <scope>NUCLEOTIDE SEQUENCE [LARGE SCALE GENOMIC DNA]</scope>
    <source>
        <strain>Nepal516</strain>
    </source>
</reference>
<evidence type="ECO:0000255" key="1">
    <source>
        <dbReference type="HAMAP-Rule" id="MF_01636"/>
    </source>
</evidence>
<evidence type="ECO:0000305" key="2"/>
<name>UBID_YERPN</name>
<dbReference type="EC" id="4.1.1.98" evidence="1"/>
<dbReference type="EMBL" id="CP000305">
    <property type="protein sequence ID" value="ABG16528.1"/>
    <property type="status" value="ALT_INIT"/>
    <property type="molecule type" value="Genomic_DNA"/>
</dbReference>
<dbReference type="EMBL" id="ACNQ01000001">
    <property type="protein sequence ID" value="EEO78642.1"/>
    <property type="molecule type" value="Genomic_DNA"/>
</dbReference>
<dbReference type="RefSeq" id="WP_002215917.1">
    <property type="nucleotide sequence ID" value="NZ_ACNQ01000001.1"/>
</dbReference>
<dbReference type="SMR" id="Q1CNA2"/>
<dbReference type="GeneID" id="57974939"/>
<dbReference type="KEGG" id="ypn:YPN_0195"/>
<dbReference type="HOGENOM" id="CLU_023348_4_1_6"/>
<dbReference type="UniPathway" id="UPA00232"/>
<dbReference type="Proteomes" id="UP000008936">
    <property type="component" value="Chromosome"/>
</dbReference>
<dbReference type="GO" id="GO:0005829">
    <property type="term" value="C:cytosol"/>
    <property type="evidence" value="ECO:0007669"/>
    <property type="project" value="TreeGrafter"/>
</dbReference>
<dbReference type="GO" id="GO:0005886">
    <property type="term" value="C:plasma membrane"/>
    <property type="evidence" value="ECO:0007669"/>
    <property type="project" value="UniProtKB-SubCell"/>
</dbReference>
<dbReference type="GO" id="GO:0008694">
    <property type="term" value="F:3-octaprenyl-4-hydroxybenzoate carboxy-lyase activity"/>
    <property type="evidence" value="ECO:0007669"/>
    <property type="project" value="UniProtKB-UniRule"/>
</dbReference>
<dbReference type="GO" id="GO:0046872">
    <property type="term" value="F:metal ion binding"/>
    <property type="evidence" value="ECO:0007669"/>
    <property type="project" value="UniProtKB-KW"/>
</dbReference>
<dbReference type="GO" id="GO:0006744">
    <property type="term" value="P:ubiquinone biosynthetic process"/>
    <property type="evidence" value="ECO:0007669"/>
    <property type="project" value="UniProtKB-UniRule"/>
</dbReference>
<dbReference type="FunFam" id="1.20.5.570:FF:000001">
    <property type="entry name" value="3-octaprenyl-4-hydroxybenzoate carboxy-lyase"/>
    <property type="match status" value="1"/>
</dbReference>
<dbReference type="FunFam" id="3.40.1670.10:FF:000001">
    <property type="entry name" value="3-octaprenyl-4-hydroxybenzoate carboxy-lyase"/>
    <property type="match status" value="1"/>
</dbReference>
<dbReference type="Gene3D" id="1.20.5.570">
    <property type="entry name" value="Single helix bin"/>
    <property type="match status" value="1"/>
</dbReference>
<dbReference type="Gene3D" id="3.40.1670.10">
    <property type="entry name" value="UbiD C-terminal domain-like"/>
    <property type="match status" value="1"/>
</dbReference>
<dbReference type="HAMAP" id="MF_01636">
    <property type="entry name" value="UbiD"/>
    <property type="match status" value="1"/>
</dbReference>
<dbReference type="InterPro" id="IPR002830">
    <property type="entry name" value="UbiD"/>
</dbReference>
<dbReference type="InterPro" id="IPR049381">
    <property type="entry name" value="UbiD-like_C"/>
</dbReference>
<dbReference type="InterPro" id="IPR049383">
    <property type="entry name" value="UbiD-like_N"/>
</dbReference>
<dbReference type="InterPro" id="IPR023677">
    <property type="entry name" value="UbiD_bacteria"/>
</dbReference>
<dbReference type="InterPro" id="IPR048304">
    <property type="entry name" value="UbiD_Rift_dom"/>
</dbReference>
<dbReference type="NCBIfam" id="NF008175">
    <property type="entry name" value="PRK10922.1"/>
    <property type="match status" value="1"/>
</dbReference>
<dbReference type="NCBIfam" id="TIGR00148">
    <property type="entry name" value="UbiD family decarboxylase"/>
    <property type="match status" value="1"/>
</dbReference>
<dbReference type="PANTHER" id="PTHR30108">
    <property type="entry name" value="3-OCTAPRENYL-4-HYDROXYBENZOATE CARBOXY-LYASE-RELATED"/>
    <property type="match status" value="1"/>
</dbReference>
<dbReference type="PANTHER" id="PTHR30108:SF17">
    <property type="entry name" value="FERULIC ACID DECARBOXYLASE 1"/>
    <property type="match status" value="1"/>
</dbReference>
<dbReference type="Pfam" id="PF01977">
    <property type="entry name" value="UbiD"/>
    <property type="match status" value="1"/>
</dbReference>
<dbReference type="Pfam" id="PF20696">
    <property type="entry name" value="UbiD_C"/>
    <property type="match status" value="1"/>
</dbReference>
<dbReference type="Pfam" id="PF20695">
    <property type="entry name" value="UbiD_N"/>
    <property type="match status" value="1"/>
</dbReference>
<dbReference type="SUPFAM" id="SSF50475">
    <property type="entry name" value="FMN-binding split barrel"/>
    <property type="match status" value="1"/>
</dbReference>
<dbReference type="SUPFAM" id="SSF143968">
    <property type="entry name" value="UbiD C-terminal domain-like"/>
    <property type="match status" value="1"/>
</dbReference>
<gene>
    <name evidence="1" type="primary">ubiD</name>
    <name type="ordered locus">YPN_0195</name>
    <name type="ORF">YP516_0161</name>
</gene>
<keyword id="KW-1003">Cell membrane</keyword>
<keyword id="KW-0210">Decarboxylase</keyword>
<keyword id="KW-0285">Flavoprotein</keyword>
<keyword id="KW-0288">FMN</keyword>
<keyword id="KW-0456">Lyase</keyword>
<keyword id="KW-0464">Manganese</keyword>
<keyword id="KW-0472">Membrane</keyword>
<keyword id="KW-0479">Metal-binding</keyword>
<keyword id="KW-0831">Ubiquinone biosynthesis</keyword>
<protein>
    <recommendedName>
        <fullName evidence="1">3-octaprenyl-4-hydroxybenzoate carboxy-lyase</fullName>
        <ecNumber evidence="1">4.1.1.98</ecNumber>
    </recommendedName>
    <alternativeName>
        <fullName evidence="1">Polyprenyl p-hydroxybenzoate decarboxylase</fullName>
    </alternativeName>
</protein>
<comment type="function">
    <text evidence="1">Catalyzes the decarboxylation of 3-octaprenyl-4-hydroxy benzoate to 2-octaprenylphenol, an intermediate step in ubiquinone biosynthesis.</text>
</comment>
<comment type="catalytic activity">
    <reaction evidence="1">
        <text>a 4-hydroxy-3-(all-trans-polyprenyl)benzoate + H(+) = a 2-(all-trans-polyprenyl)phenol + CO2</text>
        <dbReference type="Rhea" id="RHEA:41680"/>
        <dbReference type="Rhea" id="RHEA-COMP:9514"/>
        <dbReference type="Rhea" id="RHEA-COMP:9516"/>
        <dbReference type="ChEBI" id="CHEBI:1269"/>
        <dbReference type="ChEBI" id="CHEBI:15378"/>
        <dbReference type="ChEBI" id="CHEBI:16526"/>
        <dbReference type="ChEBI" id="CHEBI:78396"/>
        <dbReference type="EC" id="4.1.1.98"/>
    </reaction>
</comment>
<comment type="cofactor">
    <cofactor evidence="1">
        <name>prenylated FMN</name>
        <dbReference type="ChEBI" id="CHEBI:87746"/>
    </cofactor>
    <text evidence="1">Binds 1 prenylated FMN per subunit.</text>
</comment>
<comment type="cofactor">
    <cofactor evidence="1">
        <name>Mn(2+)</name>
        <dbReference type="ChEBI" id="CHEBI:29035"/>
    </cofactor>
</comment>
<comment type="pathway">
    <text evidence="1">Cofactor biosynthesis; ubiquinone biosynthesis.</text>
</comment>
<comment type="subunit">
    <text evidence="1">Homohexamer.</text>
</comment>
<comment type="subcellular location">
    <subcellularLocation>
        <location evidence="1">Cell membrane</location>
        <topology evidence="1">Peripheral membrane protein</topology>
    </subcellularLocation>
</comment>
<comment type="similarity">
    <text evidence="1">Belongs to the UbiD family.</text>
</comment>
<comment type="sequence caution" evidence="2">
    <conflict type="erroneous initiation">
        <sequence resource="EMBL-CDS" id="ABG16528"/>
    </conflict>
</comment>
<sequence length="498" mass="56311">MISMKYRDLRDFLSLLEQRGELKRISQPIDPYLEMTEIADRTLRAGGPALLFENPKGYSMPVLCNLFGTAKRVAMGMGQEDVSALRDVGKLLAFLKEPDPPKGFRDLFDKLPKFKQVLNMPTKRLNSAPCQEQVWQGEDVDLSRIPVMHCWPEDAAPLVSWGLTITRGPHKERQNLGIYRQQVLGKNKLIMRWLSHRGGALDYQEWCEAHPGERFPVAVALGADPATILAAVTPVPDTLSEYAFAGLLRGHKTEVVKCLSNDLEVPASAEIVLEGYIEQGDMAPEGPYGDHTGYYNEIDNFPVFTVTHITQRQDAIYHSTYTGRPPDEPAVMGVALNEVFVPILQKQFPEIVDFYLPPEGCSYRLAVVTIKKQYAGHAKRVMMGIWSFLRQFMYTKFVIVCDDDINARDWNDVIWAITTRMDPSRDTVLIENTPIDYLDFASPVSGLGSKMGLDATNKWPAETPREWGRPIKMDEDVRARIDALWDELAIFSDKDAKR</sequence>